<comment type="function">
    <text evidence="1">Activates ribosomal RNA transcription. Plays a direct role in upstream activation of rRNA promoters.</text>
</comment>
<comment type="subunit">
    <text evidence="1">Homodimer.</text>
</comment>
<comment type="similarity">
    <text evidence="1">Belongs to the transcriptional regulatory Fis family.</text>
</comment>
<sequence>MFEQNLTSEALTVTTVTSQDQITQKPLRDSVKASLKNYLAQLNGQEVTELYELVLAEVEQPLLDTIMQYTRGNQTRAATMMGINRGTLRKKLKKYGMN</sequence>
<dbReference type="EMBL" id="BA000037">
    <property type="protein sequence ID" value="BAC95903.1"/>
    <property type="molecule type" value="Genomic_DNA"/>
</dbReference>
<dbReference type="RefSeq" id="WP_000462885.1">
    <property type="nucleotide sequence ID" value="NC_005139.1"/>
</dbReference>
<dbReference type="SMR" id="Q7MGT8"/>
<dbReference type="STRING" id="672.VV93_v1c28570"/>
<dbReference type="GeneID" id="97171130"/>
<dbReference type="KEGG" id="vvy:VV3139"/>
<dbReference type="eggNOG" id="COG2901">
    <property type="taxonomic scope" value="Bacteria"/>
</dbReference>
<dbReference type="HOGENOM" id="CLU_158040_3_0_6"/>
<dbReference type="Proteomes" id="UP000002675">
    <property type="component" value="Chromosome I"/>
</dbReference>
<dbReference type="GO" id="GO:0003700">
    <property type="term" value="F:DNA-binding transcription factor activity"/>
    <property type="evidence" value="ECO:0007669"/>
    <property type="project" value="UniProtKB-UniRule"/>
</dbReference>
<dbReference type="GO" id="GO:0043565">
    <property type="term" value="F:sequence-specific DNA binding"/>
    <property type="evidence" value="ECO:0007669"/>
    <property type="project" value="InterPro"/>
</dbReference>
<dbReference type="FunFam" id="1.10.10.60:FF:000006">
    <property type="entry name" value="DNA-binding protein Fis"/>
    <property type="match status" value="1"/>
</dbReference>
<dbReference type="Gene3D" id="1.10.10.60">
    <property type="entry name" value="Homeodomain-like"/>
    <property type="match status" value="1"/>
</dbReference>
<dbReference type="HAMAP" id="MF_00166">
    <property type="entry name" value="DNA_binding_Fis"/>
    <property type="match status" value="1"/>
</dbReference>
<dbReference type="InterPro" id="IPR005412">
    <property type="entry name" value="Fis_DNA-bd"/>
</dbReference>
<dbReference type="InterPro" id="IPR009057">
    <property type="entry name" value="Homeodomain-like_sf"/>
</dbReference>
<dbReference type="InterPro" id="IPR002197">
    <property type="entry name" value="HTH_Fis"/>
</dbReference>
<dbReference type="InterPro" id="IPR050207">
    <property type="entry name" value="Trans_regulatory_Fis"/>
</dbReference>
<dbReference type="NCBIfam" id="NF001659">
    <property type="entry name" value="PRK00430.1"/>
    <property type="match status" value="1"/>
</dbReference>
<dbReference type="PANTHER" id="PTHR47918">
    <property type="entry name" value="DNA-BINDING PROTEIN FIS"/>
    <property type="match status" value="1"/>
</dbReference>
<dbReference type="PANTHER" id="PTHR47918:SF1">
    <property type="entry name" value="DNA-BINDING PROTEIN FIS"/>
    <property type="match status" value="1"/>
</dbReference>
<dbReference type="Pfam" id="PF02954">
    <property type="entry name" value="HTH_8"/>
    <property type="match status" value="1"/>
</dbReference>
<dbReference type="PIRSF" id="PIRSF002097">
    <property type="entry name" value="DNA-binding_Fis"/>
    <property type="match status" value="1"/>
</dbReference>
<dbReference type="PRINTS" id="PR01591">
    <property type="entry name" value="DNABINDNGFIS"/>
</dbReference>
<dbReference type="PRINTS" id="PR01590">
    <property type="entry name" value="HTHFIS"/>
</dbReference>
<dbReference type="SUPFAM" id="SSF46689">
    <property type="entry name" value="Homeodomain-like"/>
    <property type="match status" value="1"/>
</dbReference>
<proteinExistence type="inferred from homology"/>
<feature type="chain" id="PRO_0000203902" description="DNA-binding protein Fis">
    <location>
        <begin position="1"/>
        <end position="98"/>
    </location>
</feature>
<feature type="DNA-binding region" description="H-T-H motif" evidence="1">
    <location>
        <begin position="74"/>
        <end position="93"/>
    </location>
</feature>
<name>FIS_VIBVY</name>
<accession>Q7MGT8</accession>
<evidence type="ECO:0000255" key="1">
    <source>
        <dbReference type="HAMAP-Rule" id="MF_00166"/>
    </source>
</evidence>
<keyword id="KW-0010">Activator</keyword>
<keyword id="KW-0238">DNA-binding</keyword>
<keyword id="KW-0804">Transcription</keyword>
<keyword id="KW-0805">Transcription regulation</keyword>
<protein>
    <recommendedName>
        <fullName evidence="1">DNA-binding protein Fis</fullName>
    </recommendedName>
</protein>
<reference key="1">
    <citation type="journal article" date="2003" name="Genome Res.">
        <title>Comparative genome analysis of Vibrio vulnificus, a marine pathogen.</title>
        <authorList>
            <person name="Chen C.-Y."/>
            <person name="Wu K.-M."/>
            <person name="Chang Y.-C."/>
            <person name="Chang C.-H."/>
            <person name="Tsai H.-C."/>
            <person name="Liao T.-L."/>
            <person name="Liu Y.-M."/>
            <person name="Chen H.-J."/>
            <person name="Shen A.B.-T."/>
            <person name="Li J.-C."/>
            <person name="Su T.-L."/>
            <person name="Shao C.-P."/>
            <person name="Lee C.-T."/>
            <person name="Hor L.-I."/>
            <person name="Tsai S.-F."/>
        </authorList>
    </citation>
    <scope>NUCLEOTIDE SEQUENCE [LARGE SCALE GENOMIC DNA]</scope>
    <source>
        <strain>YJ016</strain>
    </source>
</reference>
<gene>
    <name evidence="1" type="primary">fis</name>
    <name type="ordered locus">VV3139</name>
</gene>
<organism>
    <name type="scientific">Vibrio vulnificus (strain YJ016)</name>
    <dbReference type="NCBI Taxonomy" id="196600"/>
    <lineage>
        <taxon>Bacteria</taxon>
        <taxon>Pseudomonadati</taxon>
        <taxon>Pseudomonadota</taxon>
        <taxon>Gammaproteobacteria</taxon>
        <taxon>Vibrionales</taxon>
        <taxon>Vibrionaceae</taxon>
        <taxon>Vibrio</taxon>
    </lineage>
</organism>